<keyword id="KW-0067">ATP-binding</keyword>
<keyword id="KW-0997">Cell inner membrane</keyword>
<keyword id="KW-1003">Cell membrane</keyword>
<keyword id="KW-0963">Cytoplasm</keyword>
<keyword id="KW-0472">Membrane</keyword>
<keyword id="KW-0547">Nucleotide-binding</keyword>
<keyword id="KW-0653">Protein transport</keyword>
<keyword id="KW-1278">Translocase</keyword>
<keyword id="KW-0811">Translocation</keyword>
<keyword id="KW-0813">Transport</keyword>
<evidence type="ECO:0000255" key="1">
    <source>
        <dbReference type="HAMAP-Rule" id="MF_01382"/>
    </source>
</evidence>
<comment type="function">
    <text evidence="1">Part of the Sec protein translocase complex. Interacts with the SecYEG preprotein conducting channel. Has a central role in coupling the hydrolysis of ATP to the transfer of proteins into and across the cell membrane, serving as an ATP-driven molecular motor driving the stepwise translocation of polypeptide chains across the membrane.</text>
</comment>
<comment type="catalytic activity">
    <reaction evidence="1">
        <text>ATP + H2O + cellular proteinSide 1 = ADP + phosphate + cellular proteinSide 2.</text>
        <dbReference type="EC" id="7.4.2.8"/>
    </reaction>
</comment>
<comment type="subunit">
    <text evidence="1">Monomer and homodimer. Part of the essential Sec protein translocation apparatus which comprises SecA, SecYEG and auxiliary proteins SecDF. Other proteins may also be involved.</text>
</comment>
<comment type="subcellular location">
    <subcellularLocation>
        <location evidence="1">Cell inner membrane</location>
        <topology evidence="1">Peripheral membrane protein</topology>
        <orientation evidence="1">Cytoplasmic side</orientation>
    </subcellularLocation>
    <subcellularLocation>
        <location evidence="1">Cytoplasm</location>
    </subcellularLocation>
    <text evidence="1">Distribution is 50-50.</text>
</comment>
<comment type="similarity">
    <text evidence="1">Belongs to the SecA family.</text>
</comment>
<dbReference type="EC" id="7.4.2.8" evidence="1"/>
<dbReference type="EMBL" id="AM884176">
    <property type="protein sequence ID" value="CAP03514.1"/>
    <property type="molecule type" value="Genomic_DNA"/>
</dbReference>
<dbReference type="RefSeq" id="WP_009873306.1">
    <property type="nucleotide sequence ID" value="NC_010287.1"/>
</dbReference>
<dbReference type="RefSeq" id="YP_001654161.1">
    <property type="nucleotide sequence ID" value="NC_010287.1"/>
</dbReference>
<dbReference type="SMR" id="B0B8S7"/>
<dbReference type="KEGG" id="ctb:CTL0070"/>
<dbReference type="PATRIC" id="fig|471472.4.peg.75"/>
<dbReference type="HOGENOM" id="CLU_005314_0_0_0"/>
<dbReference type="Proteomes" id="UP001154402">
    <property type="component" value="Chromosome"/>
</dbReference>
<dbReference type="GO" id="GO:0031522">
    <property type="term" value="C:cell envelope Sec protein transport complex"/>
    <property type="evidence" value="ECO:0007669"/>
    <property type="project" value="TreeGrafter"/>
</dbReference>
<dbReference type="GO" id="GO:0005829">
    <property type="term" value="C:cytosol"/>
    <property type="evidence" value="ECO:0007669"/>
    <property type="project" value="TreeGrafter"/>
</dbReference>
<dbReference type="GO" id="GO:0005886">
    <property type="term" value="C:plasma membrane"/>
    <property type="evidence" value="ECO:0007669"/>
    <property type="project" value="UniProtKB-SubCell"/>
</dbReference>
<dbReference type="GO" id="GO:0005524">
    <property type="term" value="F:ATP binding"/>
    <property type="evidence" value="ECO:0007669"/>
    <property type="project" value="UniProtKB-UniRule"/>
</dbReference>
<dbReference type="GO" id="GO:0008564">
    <property type="term" value="F:protein-exporting ATPase activity"/>
    <property type="evidence" value="ECO:0007669"/>
    <property type="project" value="UniProtKB-EC"/>
</dbReference>
<dbReference type="GO" id="GO:0065002">
    <property type="term" value="P:intracellular protein transmembrane transport"/>
    <property type="evidence" value="ECO:0007669"/>
    <property type="project" value="UniProtKB-UniRule"/>
</dbReference>
<dbReference type="GO" id="GO:0017038">
    <property type="term" value="P:protein import"/>
    <property type="evidence" value="ECO:0007669"/>
    <property type="project" value="InterPro"/>
</dbReference>
<dbReference type="GO" id="GO:0006605">
    <property type="term" value="P:protein targeting"/>
    <property type="evidence" value="ECO:0007669"/>
    <property type="project" value="UniProtKB-UniRule"/>
</dbReference>
<dbReference type="GO" id="GO:0043952">
    <property type="term" value="P:protein transport by the Sec complex"/>
    <property type="evidence" value="ECO:0007669"/>
    <property type="project" value="TreeGrafter"/>
</dbReference>
<dbReference type="CDD" id="cd17928">
    <property type="entry name" value="DEXDc_SecA"/>
    <property type="match status" value="1"/>
</dbReference>
<dbReference type="CDD" id="cd18803">
    <property type="entry name" value="SF2_C_secA"/>
    <property type="match status" value="1"/>
</dbReference>
<dbReference type="FunFam" id="3.40.50.300:FF:000694">
    <property type="entry name" value="Preprotein translocase subunit SecA"/>
    <property type="match status" value="1"/>
</dbReference>
<dbReference type="FunFam" id="1.10.3060.10:FF:000011">
    <property type="entry name" value="Protein translocase subunit SecA"/>
    <property type="match status" value="1"/>
</dbReference>
<dbReference type="FunFam" id="3.40.50.300:FF:000787">
    <property type="entry name" value="Protein translocase subunit SecA"/>
    <property type="match status" value="1"/>
</dbReference>
<dbReference type="Gene3D" id="1.10.3060.10">
    <property type="entry name" value="Helical scaffold and wing domains of SecA"/>
    <property type="match status" value="1"/>
</dbReference>
<dbReference type="Gene3D" id="3.40.50.300">
    <property type="entry name" value="P-loop containing nucleotide triphosphate hydrolases"/>
    <property type="match status" value="2"/>
</dbReference>
<dbReference type="Gene3D" id="3.90.1440.10">
    <property type="entry name" value="SecA, preprotein cross-linking domain"/>
    <property type="match status" value="1"/>
</dbReference>
<dbReference type="HAMAP" id="MF_01382">
    <property type="entry name" value="SecA"/>
    <property type="match status" value="1"/>
</dbReference>
<dbReference type="InterPro" id="IPR014001">
    <property type="entry name" value="Helicase_ATP-bd"/>
</dbReference>
<dbReference type="InterPro" id="IPR001650">
    <property type="entry name" value="Helicase_C-like"/>
</dbReference>
<dbReference type="InterPro" id="IPR027417">
    <property type="entry name" value="P-loop_NTPase"/>
</dbReference>
<dbReference type="InterPro" id="IPR000185">
    <property type="entry name" value="SecA"/>
</dbReference>
<dbReference type="InterPro" id="IPR020937">
    <property type="entry name" value="SecA_CS"/>
</dbReference>
<dbReference type="InterPro" id="IPR011115">
    <property type="entry name" value="SecA_DEAD"/>
</dbReference>
<dbReference type="InterPro" id="IPR014018">
    <property type="entry name" value="SecA_motor_DEAD"/>
</dbReference>
<dbReference type="InterPro" id="IPR011130">
    <property type="entry name" value="SecA_preprotein_X-link_dom"/>
</dbReference>
<dbReference type="InterPro" id="IPR044722">
    <property type="entry name" value="SecA_SF2_C"/>
</dbReference>
<dbReference type="InterPro" id="IPR011116">
    <property type="entry name" value="SecA_Wing/Scaffold"/>
</dbReference>
<dbReference type="InterPro" id="IPR036266">
    <property type="entry name" value="SecA_Wing/Scaffold_sf"/>
</dbReference>
<dbReference type="InterPro" id="IPR036670">
    <property type="entry name" value="SecA_X-link_sf"/>
</dbReference>
<dbReference type="NCBIfam" id="TIGR00963">
    <property type="entry name" value="secA"/>
    <property type="match status" value="1"/>
</dbReference>
<dbReference type="PANTHER" id="PTHR30612:SF0">
    <property type="entry name" value="CHLOROPLAST PROTEIN-TRANSPORTING ATPASE"/>
    <property type="match status" value="1"/>
</dbReference>
<dbReference type="PANTHER" id="PTHR30612">
    <property type="entry name" value="SECA INNER MEMBRANE COMPONENT OF SEC PROTEIN SECRETION SYSTEM"/>
    <property type="match status" value="1"/>
</dbReference>
<dbReference type="Pfam" id="PF21090">
    <property type="entry name" value="P-loop_SecA"/>
    <property type="match status" value="1"/>
</dbReference>
<dbReference type="Pfam" id="PF07517">
    <property type="entry name" value="SecA_DEAD"/>
    <property type="match status" value="1"/>
</dbReference>
<dbReference type="Pfam" id="PF01043">
    <property type="entry name" value="SecA_PP_bind"/>
    <property type="match status" value="1"/>
</dbReference>
<dbReference type="Pfam" id="PF07516">
    <property type="entry name" value="SecA_SW"/>
    <property type="match status" value="1"/>
</dbReference>
<dbReference type="PRINTS" id="PR00906">
    <property type="entry name" value="SECA"/>
</dbReference>
<dbReference type="SMART" id="SM00957">
    <property type="entry name" value="SecA_DEAD"/>
    <property type="match status" value="1"/>
</dbReference>
<dbReference type="SMART" id="SM00958">
    <property type="entry name" value="SecA_PP_bind"/>
    <property type="match status" value="1"/>
</dbReference>
<dbReference type="SUPFAM" id="SSF81886">
    <property type="entry name" value="Helical scaffold and wing domains of SecA"/>
    <property type="match status" value="1"/>
</dbReference>
<dbReference type="SUPFAM" id="SSF52540">
    <property type="entry name" value="P-loop containing nucleoside triphosphate hydrolases"/>
    <property type="match status" value="2"/>
</dbReference>
<dbReference type="SUPFAM" id="SSF81767">
    <property type="entry name" value="Pre-protein crosslinking domain of SecA"/>
    <property type="match status" value="1"/>
</dbReference>
<dbReference type="PROSITE" id="PS01312">
    <property type="entry name" value="SECA"/>
    <property type="match status" value="1"/>
</dbReference>
<dbReference type="PROSITE" id="PS51196">
    <property type="entry name" value="SECA_MOTOR_DEAD"/>
    <property type="match status" value="1"/>
</dbReference>
<gene>
    <name evidence="1" type="primary">secA</name>
    <name type="ordered locus">CTL0070</name>
</gene>
<feature type="chain" id="PRO_1000144991" description="Protein translocase subunit SecA">
    <location>
        <begin position="1"/>
        <end position="969"/>
    </location>
</feature>
<feature type="binding site" evidence="1">
    <location>
        <position position="99"/>
    </location>
    <ligand>
        <name>ATP</name>
        <dbReference type="ChEBI" id="CHEBI:30616"/>
    </ligand>
</feature>
<feature type="binding site" evidence="1">
    <location>
        <begin position="117"/>
        <end position="121"/>
    </location>
    <ligand>
        <name>ATP</name>
        <dbReference type="ChEBI" id="CHEBI:30616"/>
    </ligand>
</feature>
<feature type="binding site" evidence="1">
    <location>
        <position position="631"/>
    </location>
    <ligand>
        <name>ATP</name>
        <dbReference type="ChEBI" id="CHEBI:30616"/>
    </ligand>
</feature>
<name>SECA_CHLT2</name>
<proteinExistence type="inferred from homology"/>
<sequence length="969" mass="110402">MMDFLKRFFGSSQERILKRFQKLVEEVNACDEKFSSLSDDELREKTPQLKQRYQDGESLDKLLPEAYGVVKNVCRRLAGTPVEVSGYHQQWDMVPYDVQILGAIAMHKGFITEMQTGEGKTLTAVMPLYLNALTGKPVHLVTVNDYLAQRDCEWVGSVLRWLGLTTGVLVSGSPPEKRKAIYQCDVVYGTASEFGFDYLRDNSIATRKEEQVGRGFYFAIIDEIDSVLIDEARTPLIISGPGEKHNPVYFELKDRVAELVYFQREMCNHIAIEARKVLDPFLGTDVLPKDKKVMEAISEACRALWLVSKGMPLNRVLRRVREHPDLRAMIDKWDVFYHAEQNKEECLEKLSSLYIVVDEHNNDFELTDKGMLQWIEKIGGAAEDFVMMDMGHEYALIEEDATLSPADKLNRKIAVSEKDTQRKARAHGLRQLLRAHLLMEKDIDYIVRDDQIVIIDEHTGRPQPGRRFSEGLHQAIEAKEHVTIRKESQTFATVTLQNFFRLYEKLAGMTGTAITESREFKEIYSLYVLQVPTFKPCLRIDHNDAFYMTEREKYQAIVAEIISAHRSGKPILIGTESVEVSEKLSRILRQNRINHTVLNAKNHAQEAEIIAGAGKVGAVTVATNMAGRGTDIKLDEEAVAAGGLYVIGTSRHQSRRIDRQLRGRCARLGDPGAAKFFLSFEDRLMRLFASPKLNTLIRHFRPPEGEAMSDPMFDRLIETAQKRVEGRNYTIRKHTLEYDDVMNKQRQTIYAFRNDVLHAEDLFVVAKEQIEHVALALAFLILKDAHADHCSLPKIEEWLSYSFPVKLDDQEIRRLGDVDAVADYIGDLLIEAFDVKFSAMLAEFTEIIGSAANAQGICNDILRSVIISHIDEEWKVHLVDMDLLRSEVGLRSVGQKDPLIEFKNESFLLFEGLIRDIRIAIVKHLFALELSLTRSDRPDNAIPTVATAFHNHDNFRPMELTIVGEEEES</sequence>
<reference key="1">
    <citation type="journal article" date="2008" name="Genome Res.">
        <title>Chlamydia trachomatis: genome sequence analysis of lymphogranuloma venereum isolates.</title>
        <authorList>
            <person name="Thomson N.R."/>
            <person name="Holden M.T.G."/>
            <person name="Carder C."/>
            <person name="Lennard N."/>
            <person name="Lockey S.J."/>
            <person name="Marsh P."/>
            <person name="Skipp P."/>
            <person name="O'Connor C.D."/>
            <person name="Goodhead I."/>
            <person name="Norbertzcak H."/>
            <person name="Harris B."/>
            <person name="Ormond D."/>
            <person name="Rance R."/>
            <person name="Quail M.A."/>
            <person name="Parkhill J."/>
            <person name="Stephens R.S."/>
            <person name="Clarke I.N."/>
        </authorList>
    </citation>
    <scope>NUCLEOTIDE SEQUENCE [LARGE SCALE GENOMIC DNA]</scope>
    <source>
        <strain>ATCC VR-902B / DSM 19102 / 434/Bu</strain>
    </source>
</reference>
<organism>
    <name type="scientific">Chlamydia trachomatis serovar L2 (strain ATCC VR-902B / DSM 19102 / 434/Bu)</name>
    <dbReference type="NCBI Taxonomy" id="471472"/>
    <lineage>
        <taxon>Bacteria</taxon>
        <taxon>Pseudomonadati</taxon>
        <taxon>Chlamydiota</taxon>
        <taxon>Chlamydiia</taxon>
        <taxon>Chlamydiales</taxon>
        <taxon>Chlamydiaceae</taxon>
        <taxon>Chlamydia/Chlamydophila group</taxon>
        <taxon>Chlamydia</taxon>
    </lineage>
</organism>
<accession>B0B8S7</accession>
<protein>
    <recommendedName>
        <fullName evidence="1">Protein translocase subunit SecA</fullName>
        <ecNumber evidence="1">7.4.2.8</ecNumber>
    </recommendedName>
</protein>